<gene>
    <name type="ordered locus">At3g58430</name>
    <name type="ORF">F14P22.20</name>
</gene>
<name>MCC30_ARATH</name>
<comment type="sequence caution" evidence="3">
    <conflict type="erroneous gene model prediction">
        <sequence resource="EMBL-CDS" id="CAB68181"/>
    </conflict>
</comment>
<keyword id="KW-0175">Coiled coil</keyword>
<keyword id="KW-1185">Reference proteome</keyword>
<feature type="chain" id="PRO_0000429307" description="MATH domain and coiled-coil domain-containing protein At3g58430">
    <location>
        <begin position="1"/>
        <end position="325"/>
    </location>
</feature>
<feature type="domain" description="MATH" evidence="2">
    <location>
        <begin position="6"/>
        <end position="131"/>
    </location>
</feature>
<feature type="coiled-coil region" evidence="1">
    <location>
        <begin position="258"/>
        <end position="306"/>
    </location>
</feature>
<sequence length="325" mass="37506">MEKQAHKKFCWIIKNFSPQSERLYSVPVLIGDCKWRPIAYPIRDKYFSLCLQVVDFESLPCGWGRYVELRLTLRNQHNSLNLSIKADHCFDEKRTTWGIPIPERIPICKLQTELYQSEHVVKGDFKIIAEVDVFEAVGTLTESDISGKASELLTKKIRNDGNESGDLLKKTSPEKESNHVDVNGFQVLPSQVEYVRSIFERHPDIAVEFRAKNQHLRTSCMIFLLSLIETLCQSLEELSNEDLVEADIALTYVKDAGFKVDWLEKKLDQVKDKKEREQSGLARLHELEEYLLKLKQKCSNLDLLVEKENVELSATRTPMSFNDVV</sequence>
<accession>F4J5U9</accession>
<accession>Q9M2H3</accession>
<dbReference type="EMBL" id="AL137082">
    <property type="protein sequence ID" value="CAB68181.1"/>
    <property type="status" value="ALT_SEQ"/>
    <property type="molecule type" value="Genomic_DNA"/>
</dbReference>
<dbReference type="EMBL" id="CP002686">
    <property type="protein sequence ID" value="ANM63461.1"/>
    <property type="molecule type" value="Genomic_DNA"/>
</dbReference>
<dbReference type="PIR" id="T45663">
    <property type="entry name" value="T45663"/>
</dbReference>
<dbReference type="RefSeq" id="NP_001325547.1">
    <property type="nucleotide sequence ID" value="NM_001339925.1"/>
</dbReference>
<dbReference type="SMR" id="F4J5U9"/>
<dbReference type="FunCoup" id="F4J5U9">
    <property type="interactions" value="37"/>
</dbReference>
<dbReference type="EnsemblPlants" id="AT3G58430.2">
    <property type="protein sequence ID" value="AT3G58430.2"/>
    <property type="gene ID" value="AT3G58430"/>
</dbReference>
<dbReference type="GeneID" id="825012"/>
<dbReference type="Gramene" id="AT3G58430.2">
    <property type="protein sequence ID" value="AT3G58430.2"/>
    <property type="gene ID" value="AT3G58430"/>
</dbReference>
<dbReference type="KEGG" id="ath:AT3G58430"/>
<dbReference type="Araport" id="AT3G58430"/>
<dbReference type="TAIR" id="AT3G58430"/>
<dbReference type="eggNOG" id="KOG1987">
    <property type="taxonomic scope" value="Eukaryota"/>
</dbReference>
<dbReference type="HOGENOM" id="CLU_026537_3_1_1"/>
<dbReference type="InParanoid" id="F4J5U9"/>
<dbReference type="OMA" id="RIFEVHP"/>
<dbReference type="PRO" id="PR:F4J5U9"/>
<dbReference type="Proteomes" id="UP000006548">
    <property type="component" value="Chromosome 3"/>
</dbReference>
<dbReference type="ExpressionAtlas" id="F4J5U9">
    <property type="expression patterns" value="baseline and differential"/>
</dbReference>
<dbReference type="CDD" id="cd00121">
    <property type="entry name" value="MATH"/>
    <property type="match status" value="1"/>
</dbReference>
<dbReference type="Gene3D" id="2.60.210.10">
    <property type="entry name" value="Apoptosis, Tumor Necrosis Factor Receptor Associated Protein 2, Chain A"/>
    <property type="match status" value="1"/>
</dbReference>
<dbReference type="InterPro" id="IPR050804">
    <property type="entry name" value="MATH-CC_domain_protein"/>
</dbReference>
<dbReference type="InterPro" id="IPR002083">
    <property type="entry name" value="MATH/TRAF_dom"/>
</dbReference>
<dbReference type="InterPro" id="IPR008974">
    <property type="entry name" value="TRAF-like"/>
</dbReference>
<dbReference type="PANTHER" id="PTHR46236:SF33">
    <property type="entry name" value="MEPRIN AND TRAF-LIKE DOMAIN-CONTAINING PROTEIN-RELATED"/>
    <property type="match status" value="1"/>
</dbReference>
<dbReference type="PANTHER" id="PTHR46236">
    <property type="entry name" value="TRAF-LIKE SUPERFAMILY PROTEIN"/>
    <property type="match status" value="1"/>
</dbReference>
<dbReference type="Pfam" id="PF22486">
    <property type="entry name" value="MATH_2"/>
    <property type="match status" value="1"/>
</dbReference>
<dbReference type="SUPFAM" id="SSF49599">
    <property type="entry name" value="TRAF domain-like"/>
    <property type="match status" value="1"/>
</dbReference>
<dbReference type="PROSITE" id="PS50144">
    <property type="entry name" value="MATH"/>
    <property type="match status" value="1"/>
</dbReference>
<reference key="1">
    <citation type="journal article" date="2000" name="Nature">
        <title>Sequence and analysis of chromosome 3 of the plant Arabidopsis thaliana.</title>
        <authorList>
            <person name="Salanoubat M."/>
            <person name="Lemcke K."/>
            <person name="Rieger M."/>
            <person name="Ansorge W."/>
            <person name="Unseld M."/>
            <person name="Fartmann B."/>
            <person name="Valle G."/>
            <person name="Bloecker H."/>
            <person name="Perez-Alonso M."/>
            <person name="Obermaier B."/>
            <person name="Delseny M."/>
            <person name="Boutry M."/>
            <person name="Grivell L.A."/>
            <person name="Mache R."/>
            <person name="Puigdomenech P."/>
            <person name="De Simone V."/>
            <person name="Choisne N."/>
            <person name="Artiguenave F."/>
            <person name="Robert C."/>
            <person name="Brottier P."/>
            <person name="Wincker P."/>
            <person name="Cattolico L."/>
            <person name="Weissenbach J."/>
            <person name="Saurin W."/>
            <person name="Quetier F."/>
            <person name="Schaefer M."/>
            <person name="Mueller-Auer S."/>
            <person name="Gabel C."/>
            <person name="Fuchs M."/>
            <person name="Benes V."/>
            <person name="Wurmbach E."/>
            <person name="Drzonek H."/>
            <person name="Erfle H."/>
            <person name="Jordan N."/>
            <person name="Bangert S."/>
            <person name="Wiedelmann R."/>
            <person name="Kranz H."/>
            <person name="Voss H."/>
            <person name="Holland R."/>
            <person name="Brandt P."/>
            <person name="Nyakatura G."/>
            <person name="Vezzi A."/>
            <person name="D'Angelo M."/>
            <person name="Pallavicini A."/>
            <person name="Toppo S."/>
            <person name="Simionati B."/>
            <person name="Conrad A."/>
            <person name="Hornischer K."/>
            <person name="Kauer G."/>
            <person name="Loehnert T.-H."/>
            <person name="Nordsiek G."/>
            <person name="Reichelt J."/>
            <person name="Scharfe M."/>
            <person name="Schoen O."/>
            <person name="Bargues M."/>
            <person name="Terol J."/>
            <person name="Climent J."/>
            <person name="Navarro P."/>
            <person name="Collado C."/>
            <person name="Perez-Perez A."/>
            <person name="Ottenwaelder B."/>
            <person name="Duchemin D."/>
            <person name="Cooke R."/>
            <person name="Laudie M."/>
            <person name="Berger-Llauro C."/>
            <person name="Purnelle B."/>
            <person name="Masuy D."/>
            <person name="de Haan M."/>
            <person name="Maarse A.C."/>
            <person name="Alcaraz J.-P."/>
            <person name="Cottet A."/>
            <person name="Casacuberta E."/>
            <person name="Monfort A."/>
            <person name="Argiriou A."/>
            <person name="Flores M."/>
            <person name="Liguori R."/>
            <person name="Vitale D."/>
            <person name="Mannhaupt G."/>
            <person name="Haase D."/>
            <person name="Schoof H."/>
            <person name="Rudd S."/>
            <person name="Zaccaria P."/>
            <person name="Mewes H.-W."/>
            <person name="Mayer K.F.X."/>
            <person name="Kaul S."/>
            <person name="Town C.D."/>
            <person name="Koo H.L."/>
            <person name="Tallon L.J."/>
            <person name="Jenkins J."/>
            <person name="Rooney T."/>
            <person name="Rizzo M."/>
            <person name="Walts A."/>
            <person name="Utterback T."/>
            <person name="Fujii C.Y."/>
            <person name="Shea T.P."/>
            <person name="Creasy T.H."/>
            <person name="Haas B."/>
            <person name="Maiti R."/>
            <person name="Wu D."/>
            <person name="Peterson J."/>
            <person name="Van Aken S."/>
            <person name="Pai G."/>
            <person name="Militscher J."/>
            <person name="Sellers P."/>
            <person name="Gill J.E."/>
            <person name="Feldblyum T.V."/>
            <person name="Preuss D."/>
            <person name="Lin X."/>
            <person name="Nierman W.C."/>
            <person name="Salzberg S.L."/>
            <person name="White O."/>
            <person name="Venter J.C."/>
            <person name="Fraser C.M."/>
            <person name="Kaneko T."/>
            <person name="Nakamura Y."/>
            <person name="Sato S."/>
            <person name="Kato T."/>
            <person name="Asamizu E."/>
            <person name="Sasamoto S."/>
            <person name="Kimura T."/>
            <person name="Idesawa K."/>
            <person name="Kawashima K."/>
            <person name="Kishida Y."/>
            <person name="Kiyokawa C."/>
            <person name="Kohara M."/>
            <person name="Matsumoto M."/>
            <person name="Matsuno A."/>
            <person name="Muraki A."/>
            <person name="Nakayama S."/>
            <person name="Nakazaki N."/>
            <person name="Shinpo S."/>
            <person name="Takeuchi C."/>
            <person name="Wada T."/>
            <person name="Watanabe A."/>
            <person name="Yamada M."/>
            <person name="Yasuda M."/>
            <person name="Tabata S."/>
        </authorList>
    </citation>
    <scope>NUCLEOTIDE SEQUENCE [LARGE SCALE GENOMIC DNA]</scope>
    <source>
        <strain>cv. Columbia</strain>
    </source>
</reference>
<reference key="2">
    <citation type="journal article" date="2017" name="Plant J.">
        <title>Araport11: a complete reannotation of the Arabidopsis thaliana reference genome.</title>
        <authorList>
            <person name="Cheng C.Y."/>
            <person name="Krishnakumar V."/>
            <person name="Chan A.P."/>
            <person name="Thibaud-Nissen F."/>
            <person name="Schobel S."/>
            <person name="Town C.D."/>
        </authorList>
    </citation>
    <scope>GENOME REANNOTATION</scope>
    <source>
        <strain>cv. Columbia</strain>
    </source>
</reference>
<reference key="3">
    <citation type="journal article" date="2010" name="Plant Physiol.">
        <title>RTM3, which controls long-distance movement of potyviruses, is a member of a new plant gene family encoding a meprin and TRAF homology domain-containing protein.</title>
        <authorList>
            <person name="Cosson P."/>
            <person name="Sofer L."/>
            <person name="Le Q.H."/>
            <person name="Leger V."/>
            <person name="Schurdi-Levraud V."/>
            <person name="Whitham S.A."/>
            <person name="Yamamoto M.L."/>
            <person name="Gopalan S."/>
            <person name="Le Gall O."/>
            <person name="Candresse T."/>
            <person name="Carrington J.C."/>
            <person name="Revers F."/>
        </authorList>
    </citation>
    <scope>GENE FAMILY</scope>
</reference>
<proteinExistence type="predicted"/>
<organism>
    <name type="scientific">Arabidopsis thaliana</name>
    <name type="common">Mouse-ear cress</name>
    <dbReference type="NCBI Taxonomy" id="3702"/>
    <lineage>
        <taxon>Eukaryota</taxon>
        <taxon>Viridiplantae</taxon>
        <taxon>Streptophyta</taxon>
        <taxon>Embryophyta</taxon>
        <taxon>Tracheophyta</taxon>
        <taxon>Spermatophyta</taxon>
        <taxon>Magnoliopsida</taxon>
        <taxon>eudicotyledons</taxon>
        <taxon>Gunneridae</taxon>
        <taxon>Pentapetalae</taxon>
        <taxon>rosids</taxon>
        <taxon>malvids</taxon>
        <taxon>Brassicales</taxon>
        <taxon>Brassicaceae</taxon>
        <taxon>Camelineae</taxon>
        <taxon>Arabidopsis</taxon>
    </lineage>
</organism>
<protein>
    <recommendedName>
        <fullName>MATH domain and coiled-coil domain-containing protein At3g58430</fullName>
    </recommendedName>
    <alternativeName>
        <fullName>RTM3-like protein At3g58430</fullName>
    </alternativeName>
</protein>
<evidence type="ECO:0000255" key="1"/>
<evidence type="ECO:0000255" key="2">
    <source>
        <dbReference type="PROSITE-ProRule" id="PRU00129"/>
    </source>
</evidence>
<evidence type="ECO:0000305" key="3"/>